<feature type="chain" id="PRO_0000278097" description="Keratin, type II cytoskeletal 1">
    <location>
        <begin position="1"/>
        <end position="619"/>
    </location>
</feature>
<feature type="domain" description="IF rod" evidence="5">
    <location>
        <begin position="181"/>
        <end position="494"/>
    </location>
</feature>
<feature type="region of interest" description="Head" evidence="4">
    <location>
        <begin position="1"/>
        <end position="180"/>
    </location>
</feature>
<feature type="region of interest" description="Disordered" evidence="6">
    <location>
        <begin position="28"/>
        <end position="49"/>
    </location>
</feature>
<feature type="region of interest" description="Coil 1A" evidence="4">
    <location>
        <begin position="181"/>
        <end position="216"/>
    </location>
</feature>
<feature type="region of interest" description="Linker 1" evidence="4">
    <location>
        <begin position="217"/>
        <end position="235"/>
    </location>
</feature>
<feature type="region of interest" description="Coil 1B" evidence="4">
    <location>
        <begin position="236"/>
        <end position="327"/>
    </location>
</feature>
<feature type="region of interest" description="Linker 12" evidence="4">
    <location>
        <begin position="328"/>
        <end position="351"/>
    </location>
</feature>
<feature type="region of interest" description="Coil 2" evidence="4">
    <location>
        <begin position="352"/>
        <end position="490"/>
    </location>
</feature>
<feature type="region of interest" description="Tail" evidence="4">
    <location>
        <begin position="491"/>
        <end position="619"/>
    </location>
</feature>
<feature type="region of interest" description="Disordered" evidence="6">
    <location>
        <begin position="559"/>
        <end position="619"/>
    </location>
</feature>
<feature type="coiled-coil region" evidence="4">
    <location>
        <begin position="173"/>
        <end position="477"/>
    </location>
</feature>
<feature type="compositionally biased region" description="Gly residues" evidence="6">
    <location>
        <begin position="39"/>
        <end position="49"/>
    </location>
</feature>
<feature type="compositionally biased region" description="Gly residues" evidence="6">
    <location>
        <begin position="573"/>
        <end position="595"/>
    </location>
</feature>
<feature type="compositionally biased region" description="Low complexity" evidence="6">
    <location>
        <begin position="596"/>
        <end position="606"/>
    </location>
</feature>
<feature type="compositionally biased region" description="Polar residues" evidence="6">
    <location>
        <begin position="607"/>
        <end position="619"/>
    </location>
</feature>
<feature type="site" description="Stutter" evidence="4">
    <location>
        <position position="434"/>
    </location>
</feature>
<feature type="modified residue" description="Omega-N-methylarginine" evidence="2">
    <location>
        <position position="12"/>
    </location>
</feature>
<feature type="modified residue" description="Phosphoserine" evidence="2">
    <location>
        <position position="18"/>
    </location>
</feature>
<feature type="modified residue" description="Phosphoserine" evidence="3">
    <location>
        <position position="21"/>
    </location>
</feature>
<feature type="modified residue" description="Omega-N-methylarginine" evidence="2">
    <location>
        <position position="45"/>
    </location>
</feature>
<feature type="modified residue" description="Phosphoserine" evidence="3">
    <location>
        <position position="68"/>
    </location>
</feature>
<feature type="modified residue" description="N6,N6-dimethyllysine" evidence="3">
    <location>
        <position position="277"/>
    </location>
</feature>
<feature type="modified residue" description="Phosphoserine" evidence="3">
    <location>
        <position position="345"/>
    </location>
</feature>
<feature type="modified residue" description="Omega-N-methylarginine" evidence="2">
    <location>
        <position position="519"/>
    </location>
</feature>
<feature type="modified residue" description="Omega-N-methylarginine" evidence="2">
    <location>
        <position position="575"/>
    </location>
</feature>
<reference evidence="9" key="1">
    <citation type="journal article" date="2005" name="Cytogenet. Genome Res.">
        <title>Comparative sequence analysis and radiation hybrid mapping of two epidermal type II keratin genes in the dog: keratin 1 and keratin 2e.</title>
        <authorList>
            <person name="Credille K.M."/>
            <person name="Guyon R."/>
            <person name="Andre C."/>
            <person name="Murphy K."/>
            <person name="Tucker K."/>
            <person name="Barnhart K.F."/>
            <person name="Dunstan R.W."/>
        </authorList>
    </citation>
    <scope>NUCLEOTIDE SEQUENCE [MRNA]</scope>
    <source>
        <tissue evidence="7">Epidermis</tissue>
    </source>
</reference>
<evidence type="ECO:0000250" key="1"/>
<evidence type="ECO:0000250" key="2">
    <source>
        <dbReference type="UniProtKB" id="P04104"/>
    </source>
</evidence>
<evidence type="ECO:0000250" key="3">
    <source>
        <dbReference type="UniProtKB" id="P04264"/>
    </source>
</evidence>
<evidence type="ECO:0000255" key="4"/>
<evidence type="ECO:0000255" key="5">
    <source>
        <dbReference type="PROSITE-ProRule" id="PRU01188"/>
    </source>
</evidence>
<evidence type="ECO:0000256" key="6">
    <source>
        <dbReference type="SAM" id="MobiDB-lite"/>
    </source>
</evidence>
<evidence type="ECO:0000269" key="7">
    <source>
    </source>
</evidence>
<evidence type="ECO:0000305" key="8"/>
<evidence type="ECO:0000312" key="9">
    <source>
        <dbReference type="EMBL" id="AAQ83910.1"/>
    </source>
</evidence>
<dbReference type="EMBL" id="AY318945">
    <property type="protein sequence ID" value="AAQ83910.1"/>
    <property type="molecule type" value="mRNA"/>
</dbReference>
<dbReference type="RefSeq" id="NP_001003392.1">
    <property type="nucleotide sequence ID" value="NM_001003392.1"/>
</dbReference>
<dbReference type="SMR" id="Q6EIY9"/>
<dbReference type="FunCoup" id="Q6EIY9">
    <property type="interactions" value="6"/>
</dbReference>
<dbReference type="PaxDb" id="9612-ENSCAFP00000010719"/>
<dbReference type="GeneID" id="444857"/>
<dbReference type="KEGG" id="cfa:444857"/>
<dbReference type="CTD" id="3848"/>
<dbReference type="eggNOG" id="ENOG502QQ2I">
    <property type="taxonomic scope" value="Eukaryota"/>
</dbReference>
<dbReference type="InParanoid" id="Q6EIY9"/>
<dbReference type="OrthoDB" id="29180at33554"/>
<dbReference type="Proteomes" id="UP000002254">
    <property type="component" value="Unplaced"/>
</dbReference>
<dbReference type="Proteomes" id="UP000694429">
    <property type="component" value="Unplaced"/>
</dbReference>
<dbReference type="Proteomes" id="UP000694542">
    <property type="component" value="Unplaced"/>
</dbReference>
<dbReference type="Proteomes" id="UP000805418">
    <property type="component" value="Unplaced"/>
</dbReference>
<dbReference type="GO" id="GO:0005737">
    <property type="term" value="C:cytoplasm"/>
    <property type="evidence" value="ECO:0000250"/>
    <property type="project" value="UniProtKB"/>
</dbReference>
<dbReference type="GO" id="GO:0045095">
    <property type="term" value="C:keratin filament"/>
    <property type="evidence" value="ECO:0000318"/>
    <property type="project" value="GO_Central"/>
</dbReference>
<dbReference type="GO" id="GO:0005886">
    <property type="term" value="C:plasma membrane"/>
    <property type="evidence" value="ECO:0007669"/>
    <property type="project" value="UniProtKB-SubCell"/>
</dbReference>
<dbReference type="GO" id="GO:0046982">
    <property type="term" value="F:protein heterodimerization activity"/>
    <property type="evidence" value="ECO:0000250"/>
    <property type="project" value="UniProtKB"/>
</dbReference>
<dbReference type="GO" id="GO:0030280">
    <property type="term" value="F:structural constituent of skin epidermis"/>
    <property type="evidence" value="ECO:0000318"/>
    <property type="project" value="GO_Central"/>
</dbReference>
<dbReference type="GO" id="GO:0045109">
    <property type="term" value="P:intermediate filament organization"/>
    <property type="evidence" value="ECO:0000318"/>
    <property type="project" value="GO_Central"/>
</dbReference>
<dbReference type="GO" id="GO:0031424">
    <property type="term" value="P:keratinization"/>
    <property type="evidence" value="ECO:0000318"/>
    <property type="project" value="GO_Central"/>
</dbReference>
<dbReference type="GO" id="GO:0051290">
    <property type="term" value="P:protein heterotetramerization"/>
    <property type="evidence" value="ECO:0000250"/>
    <property type="project" value="UniProtKB"/>
</dbReference>
<dbReference type="FunFam" id="1.20.5.1160:FF:000001">
    <property type="entry name" value="Keratin type II"/>
    <property type="match status" value="1"/>
</dbReference>
<dbReference type="FunFam" id="1.20.5.170:FF:000004">
    <property type="entry name" value="Keratin, type II cytoskeletal 5"/>
    <property type="match status" value="1"/>
</dbReference>
<dbReference type="FunFam" id="1.20.5.500:FF:000001">
    <property type="entry name" value="Type II keratin 23"/>
    <property type="match status" value="1"/>
</dbReference>
<dbReference type="Gene3D" id="1.20.5.170">
    <property type="match status" value="1"/>
</dbReference>
<dbReference type="Gene3D" id="1.20.5.500">
    <property type="entry name" value="Single helix bin"/>
    <property type="match status" value="1"/>
</dbReference>
<dbReference type="Gene3D" id="1.20.5.1160">
    <property type="entry name" value="Vasodilator-stimulated phosphoprotein"/>
    <property type="match status" value="1"/>
</dbReference>
<dbReference type="InterPro" id="IPR018039">
    <property type="entry name" value="IF_conserved"/>
</dbReference>
<dbReference type="InterPro" id="IPR039008">
    <property type="entry name" value="IF_rod_dom"/>
</dbReference>
<dbReference type="InterPro" id="IPR032449">
    <property type="entry name" value="Keratin_2_1_tail"/>
</dbReference>
<dbReference type="InterPro" id="IPR032444">
    <property type="entry name" value="Keratin_2_head"/>
</dbReference>
<dbReference type="InterPro" id="IPR003054">
    <property type="entry name" value="Keratin_II"/>
</dbReference>
<dbReference type="PANTHER" id="PTHR45616">
    <property type="entry name" value="GATA-TYPE DOMAIN-CONTAINING PROTEIN"/>
    <property type="match status" value="1"/>
</dbReference>
<dbReference type="PANTHER" id="PTHR45616:SF33">
    <property type="entry name" value="KERATIN, TYPE II CYTOSKELETAL 1"/>
    <property type="match status" value="1"/>
</dbReference>
<dbReference type="Pfam" id="PF00038">
    <property type="entry name" value="Filament"/>
    <property type="match status" value="1"/>
</dbReference>
<dbReference type="Pfam" id="PF16208">
    <property type="entry name" value="Keratin_2_head"/>
    <property type="match status" value="1"/>
</dbReference>
<dbReference type="Pfam" id="PF16210">
    <property type="entry name" value="Keratin_2_tail"/>
    <property type="match status" value="1"/>
</dbReference>
<dbReference type="PRINTS" id="PR01276">
    <property type="entry name" value="TYPE2KERATIN"/>
</dbReference>
<dbReference type="SMART" id="SM01391">
    <property type="entry name" value="Filament"/>
    <property type="match status" value="1"/>
</dbReference>
<dbReference type="SUPFAM" id="SSF64593">
    <property type="entry name" value="Intermediate filament protein, coiled coil region"/>
    <property type="match status" value="3"/>
</dbReference>
<dbReference type="PROSITE" id="PS00226">
    <property type="entry name" value="IF_ROD_1"/>
    <property type="match status" value="1"/>
</dbReference>
<dbReference type="PROSITE" id="PS51842">
    <property type="entry name" value="IF_ROD_2"/>
    <property type="match status" value="1"/>
</dbReference>
<gene>
    <name evidence="3" type="primary">KRT1</name>
    <name evidence="9" type="synonym">KER1</name>
</gene>
<protein>
    <recommendedName>
        <fullName>Keratin, type II cytoskeletal 1</fullName>
    </recommendedName>
    <alternativeName>
        <fullName>Cytokeratin-1</fullName>
        <shortName>CK-1</shortName>
    </alternativeName>
    <alternativeName>
        <fullName>Epithelial keratin-1</fullName>
    </alternativeName>
    <alternativeName>
        <fullName>Keratin-1</fullName>
        <shortName>K1</shortName>
    </alternativeName>
    <alternativeName>
        <fullName>Type-II keratin Kb1</fullName>
    </alternativeName>
</protein>
<sequence>MSRHFSSRSGFRSGGGFSSGSAGLVSFQRRTTSSSVRHSGGGGGRFSGGRCGGGGGGGAGGGGFGSRSLVNLGGSKSISISVAGGGGGRGGFGGGYGGGGFGGGGFGGGSGGFGLGGGFGGGGFGGGGFGGGGFGGGGFGGGSFGPVCPPGGIQEVTINQSLLQPLNVEIDPEIQKVKTREREQIKSLNNQFASFIDKVRFLEQQNQVLQTKWELLQQVDTSTRTHSLEPYFENYISNLRRRVDQLKSDQSRMDSELKNMQDLVEDYRNKYEDEINKRTNAENEFVTIKKDVDAAFMNKVDLQAKVDNLQQEIDFLTTLYQAELSQMQTQISETNVILSMDNNRSLDLDSIISEVKAQYEEIAQKSKAEAEALYQTKYEELQITAGKHGDNLKSTKMEISELNRVAQRLRSEIDSVKKQISALQQSISDAEQRGENALKDAQSKLAELEDALQKAKEDMARLLRDYQELMNTKLALDMEIATYRTLLEGEESRMSGECAPNVSVSVNTSHTTISGGGGRGGGGFGSVGGGGGYGGGSYGSGGGSYGSGGGGGGSYGSGGGGGGGYGSSSSSGGHRGGSGGGSRSGGSSGGRGSSSGGIKTSSGSSSVKFVSTSYSRAVR</sequence>
<accession>Q6EIY9</accession>
<name>K2C1_CANLF</name>
<keyword id="KW-1003">Cell membrane</keyword>
<keyword id="KW-0164">Citrullination</keyword>
<keyword id="KW-0175">Coiled coil</keyword>
<keyword id="KW-0963">Cytoplasm</keyword>
<keyword id="KW-0403">Intermediate filament</keyword>
<keyword id="KW-0416">Keratin</keyword>
<keyword id="KW-0472">Membrane</keyword>
<keyword id="KW-0488">Methylation</keyword>
<keyword id="KW-0597">Phosphoprotein</keyword>
<keyword id="KW-1185">Reference proteome</keyword>
<comment type="function">
    <text evidence="1">May regulate the activity of kinases such as PKC and SRC via binding to integrin beta-1 (ITB1) and the receptor of activated protein C kinase 1 (RACK1). In complex with C1QBP is a high affinity receptor for kininogen-1/HMWK (By similarity).</text>
</comment>
<comment type="subunit">
    <text evidence="2 3">Heterotetramer of two type I and two type II keratins (By similarity). Heterodimer with KRT10 (By similarity). Two heterodimers of KRT1 and KRT10 form a heterotetramer (By similarity). Forms a heterodimer with KRT14; the interaction is more abundant in the absence of KRT5 (By similarity). Interacts with ITGB1 in the presence of RACK1 and SRC, and with RACK1 (By similarity). Interacts with C1QBP; the association represents a cell surface kininogen receptor (By similarity). Interacts with EPPK1; interaction is dependent of higher-order structure of intermediate filament (By similarity).</text>
</comment>
<comment type="subcellular location">
    <subcellularLocation>
        <location evidence="3">Cell membrane</location>
    </subcellularLocation>
    <subcellularLocation>
        <location evidence="3">Cytoplasm</location>
    </subcellularLocation>
</comment>
<comment type="PTM">
    <text>Undergoes deimination of some arginine residues (citrullination).</text>
</comment>
<comment type="miscellaneous">
    <text evidence="8">There are two types of cytoskeletal and microfibrillar keratin: I (acidic; 40-55 kDa) and II (neutral to basic; 56-70 kDa).</text>
</comment>
<comment type="similarity">
    <text evidence="5">Belongs to the intermediate filament family.</text>
</comment>
<proteinExistence type="evidence at transcript level"/>
<organism>
    <name type="scientific">Canis lupus familiaris</name>
    <name type="common">Dog</name>
    <name type="synonym">Canis familiaris</name>
    <dbReference type="NCBI Taxonomy" id="9615"/>
    <lineage>
        <taxon>Eukaryota</taxon>
        <taxon>Metazoa</taxon>
        <taxon>Chordata</taxon>
        <taxon>Craniata</taxon>
        <taxon>Vertebrata</taxon>
        <taxon>Euteleostomi</taxon>
        <taxon>Mammalia</taxon>
        <taxon>Eutheria</taxon>
        <taxon>Laurasiatheria</taxon>
        <taxon>Carnivora</taxon>
        <taxon>Caniformia</taxon>
        <taxon>Canidae</taxon>
        <taxon>Canis</taxon>
    </lineage>
</organism>